<feature type="signal peptide" evidence="2">
    <location>
        <begin position="1"/>
        <end position="20"/>
    </location>
</feature>
<feature type="chain" id="PRO_0000017191" description="Putative BPIFA4P protein">
    <location>
        <begin position="21"/>
        <end position="179"/>
    </location>
</feature>
<name>LATH_HUMAN</name>
<comment type="function">
    <text evidence="1">Major protein in sweat, has surfactant properties.</text>
</comment>
<comment type="subcellular location">
    <subcellularLocation>
        <location>Secreted</location>
    </subcellularLocation>
</comment>
<comment type="tissue specificity">
    <text evidence="3">Expressed in breast cancer and salivary gland.</text>
</comment>
<comment type="similarity">
    <text evidence="4">Belongs to the BPI/LBP/Plunc superfamily. Plunc family.</text>
</comment>
<comment type="caution">
    <text evidence="4">Could be the product of a pseudogene. Unitary pseudogene, the ortholog in horse is a protein-coding gene which may cause an allergic reaction in human.</text>
</comment>
<keyword id="KW-1185">Reference proteome</keyword>
<keyword id="KW-0964">Secreted</keyword>
<keyword id="KW-0732">Signal</keyword>
<organism>
    <name type="scientific">Homo sapiens</name>
    <name type="common">Human</name>
    <dbReference type="NCBI Taxonomy" id="9606"/>
    <lineage>
        <taxon>Eukaryota</taxon>
        <taxon>Metazoa</taxon>
        <taxon>Chordata</taxon>
        <taxon>Craniata</taxon>
        <taxon>Vertebrata</taxon>
        <taxon>Euteleostomi</taxon>
        <taxon>Mammalia</taxon>
        <taxon>Eutheria</taxon>
        <taxon>Euarchontoglires</taxon>
        <taxon>Primates</taxon>
        <taxon>Haplorrhini</taxon>
        <taxon>Catarrhini</taxon>
        <taxon>Hominidae</taxon>
        <taxon>Homo</taxon>
    </lineage>
</organism>
<sequence>MLNVSGLFVLLCGLLVSSSAQEVLAGVSSQLLNDLTQGLLRADFLPSLQTTGLQKPLSSAFDGVSGLLDIFGPPLTNEINTVSIQVKNPQLLHVSIESTPQRKEATVQVPFTSELIVQLLTMKPFTANMQSDIKVQIRLEKNVGGRYELAFGNCRLLPEAIWIQTGVQLAPAQNLLWQT</sequence>
<protein>
    <recommendedName>
        <fullName>Putative BPIFA4P protein</fullName>
    </recommendedName>
    <alternativeName>
        <fullName>BPI fold containing family A, member 4, pseudogene</fullName>
    </alternativeName>
    <alternativeName>
        <fullName>Breast cancer and salivary gland-expressed protein</fullName>
    </alternativeName>
    <alternativeName>
        <fullName>Putative latherin</fullName>
    </alternativeName>
</protein>
<gene>
    <name type="primary">BPIFA4P</name>
    <name type="synonym">BASE</name>
    <name type="synonym">LATH</name>
</gene>
<evidence type="ECO:0000250" key="1"/>
<evidence type="ECO:0000255" key="2"/>
<evidence type="ECO:0000269" key="3">
    <source>
    </source>
</evidence>
<evidence type="ECO:0000305" key="4"/>
<accession>Q86YQ2</accession>
<reference key="1">
    <citation type="journal article" date="2003" name="Proc. Natl. Acad. Sci. U.S.A.">
        <title>Discovery of the breast cancer gene BASE using a molecular approach to enrich for genes encoding membrane and secreted proteins.</title>
        <authorList>
            <person name="Egland K.A."/>
            <person name="Vincent J.J."/>
            <person name="Strausberg R.L."/>
            <person name="Lee B."/>
            <person name="Pastan I."/>
        </authorList>
    </citation>
    <scope>NUCLEOTIDE SEQUENCE [MRNA]</scope>
    <scope>TISSUE SPECIFICITY</scope>
</reference>
<reference key="2">
    <citation type="journal article" date="2001" name="Nature">
        <title>The DNA sequence and comparative analysis of human chromosome 20.</title>
        <authorList>
            <person name="Deloukas P."/>
            <person name="Matthews L.H."/>
            <person name="Ashurst J.L."/>
            <person name="Burton J."/>
            <person name="Gilbert J.G.R."/>
            <person name="Jones M."/>
            <person name="Stavrides G."/>
            <person name="Almeida J.P."/>
            <person name="Babbage A.K."/>
            <person name="Bagguley C.L."/>
            <person name="Bailey J."/>
            <person name="Barlow K.F."/>
            <person name="Bates K.N."/>
            <person name="Beard L.M."/>
            <person name="Beare D.M."/>
            <person name="Beasley O.P."/>
            <person name="Bird C.P."/>
            <person name="Blakey S.E."/>
            <person name="Bridgeman A.M."/>
            <person name="Brown A.J."/>
            <person name="Buck D."/>
            <person name="Burrill W.D."/>
            <person name="Butler A.P."/>
            <person name="Carder C."/>
            <person name="Carter N.P."/>
            <person name="Chapman J.C."/>
            <person name="Clamp M."/>
            <person name="Clark G."/>
            <person name="Clark L.N."/>
            <person name="Clark S.Y."/>
            <person name="Clee C.M."/>
            <person name="Clegg S."/>
            <person name="Cobley V.E."/>
            <person name="Collier R.E."/>
            <person name="Connor R.E."/>
            <person name="Corby N.R."/>
            <person name="Coulson A."/>
            <person name="Coville G.J."/>
            <person name="Deadman R."/>
            <person name="Dhami P.D."/>
            <person name="Dunn M."/>
            <person name="Ellington A.G."/>
            <person name="Frankland J.A."/>
            <person name="Fraser A."/>
            <person name="French L."/>
            <person name="Garner P."/>
            <person name="Grafham D.V."/>
            <person name="Griffiths C."/>
            <person name="Griffiths M.N.D."/>
            <person name="Gwilliam R."/>
            <person name="Hall R.E."/>
            <person name="Hammond S."/>
            <person name="Harley J.L."/>
            <person name="Heath P.D."/>
            <person name="Ho S."/>
            <person name="Holden J.L."/>
            <person name="Howden P.J."/>
            <person name="Huckle E."/>
            <person name="Hunt A.R."/>
            <person name="Hunt S.E."/>
            <person name="Jekosch K."/>
            <person name="Johnson C.M."/>
            <person name="Johnson D."/>
            <person name="Kay M.P."/>
            <person name="Kimberley A.M."/>
            <person name="King A."/>
            <person name="Knights A."/>
            <person name="Laird G.K."/>
            <person name="Lawlor S."/>
            <person name="Lehvaeslaiho M.H."/>
            <person name="Leversha M.A."/>
            <person name="Lloyd C."/>
            <person name="Lloyd D.M."/>
            <person name="Lovell J.D."/>
            <person name="Marsh V.L."/>
            <person name="Martin S.L."/>
            <person name="McConnachie L.J."/>
            <person name="McLay K."/>
            <person name="McMurray A.A."/>
            <person name="Milne S.A."/>
            <person name="Mistry D."/>
            <person name="Moore M.J.F."/>
            <person name="Mullikin J.C."/>
            <person name="Nickerson T."/>
            <person name="Oliver K."/>
            <person name="Parker A."/>
            <person name="Patel R."/>
            <person name="Pearce T.A.V."/>
            <person name="Peck A.I."/>
            <person name="Phillimore B.J.C.T."/>
            <person name="Prathalingam S.R."/>
            <person name="Plumb R.W."/>
            <person name="Ramsay H."/>
            <person name="Rice C.M."/>
            <person name="Ross M.T."/>
            <person name="Scott C.E."/>
            <person name="Sehra H.K."/>
            <person name="Shownkeen R."/>
            <person name="Sims S."/>
            <person name="Skuce C.D."/>
            <person name="Smith M.L."/>
            <person name="Soderlund C."/>
            <person name="Steward C.A."/>
            <person name="Sulston J.E."/>
            <person name="Swann R.M."/>
            <person name="Sycamore N."/>
            <person name="Taylor R."/>
            <person name="Tee L."/>
            <person name="Thomas D.W."/>
            <person name="Thorpe A."/>
            <person name="Tracey A."/>
            <person name="Tromans A.C."/>
            <person name="Vaudin M."/>
            <person name="Wall M."/>
            <person name="Wallis J.M."/>
            <person name="Whitehead S.L."/>
            <person name="Whittaker P."/>
            <person name="Willey D.L."/>
            <person name="Williams L."/>
            <person name="Williams S.A."/>
            <person name="Wilming L."/>
            <person name="Wray P.W."/>
            <person name="Hubbard T."/>
            <person name="Durbin R.M."/>
            <person name="Bentley D.R."/>
            <person name="Beck S."/>
            <person name="Rogers J."/>
        </authorList>
    </citation>
    <scope>NUCLEOTIDE SEQUENCE [LARGE SCALE GENOMIC DNA]</scope>
</reference>
<reference key="3">
    <citation type="journal article" date="2004" name="Genome Res.">
        <title>The status, quality, and expansion of the NIH full-length cDNA project: the Mammalian Gene Collection (MGC).</title>
        <authorList>
            <consortium name="The MGC Project Team"/>
        </authorList>
    </citation>
    <scope>NUCLEOTIDE SEQUENCE [LARGE SCALE MRNA]</scope>
</reference>
<dbReference type="EMBL" id="AY180924">
    <property type="protein sequence ID" value="AAO17728.1"/>
    <property type="molecule type" value="mRNA"/>
</dbReference>
<dbReference type="EMBL" id="AC018694">
    <property type="status" value="NOT_ANNOTATED_CDS"/>
    <property type="molecule type" value="Genomic_DNA"/>
</dbReference>
<dbReference type="EMBL" id="BC069128">
    <property type="status" value="NOT_ANNOTATED_CDS"/>
    <property type="molecule type" value="mRNA"/>
</dbReference>
<dbReference type="EMBL" id="BC069315">
    <property type="status" value="NOT_ANNOTATED_CDS"/>
    <property type="molecule type" value="mRNA"/>
</dbReference>
<dbReference type="SMR" id="Q86YQ2"/>
<dbReference type="FunCoup" id="Q86YQ2">
    <property type="interactions" value="4"/>
</dbReference>
<dbReference type="BioMuta" id="HGNC:20469"/>
<dbReference type="DMDM" id="38257945"/>
<dbReference type="AGR" id="HGNC:20469"/>
<dbReference type="GeneCards" id="BPIFA4P"/>
<dbReference type="HGNC" id="HGNC:20469">
    <property type="gene designation" value="BPIFA4P"/>
</dbReference>
<dbReference type="MIM" id="607627">
    <property type="type" value="gene"/>
</dbReference>
<dbReference type="neXtProt" id="NX_Q86YQ2"/>
<dbReference type="InParanoid" id="Q86YQ2"/>
<dbReference type="PAN-GO" id="Q86YQ2">
    <property type="GO annotations" value="1 GO annotation based on evolutionary models"/>
</dbReference>
<dbReference type="PhylomeDB" id="Q86YQ2"/>
<dbReference type="ChiTaRS" id="BPIFA4P">
    <property type="organism name" value="human"/>
</dbReference>
<dbReference type="Pharos" id="Q86YQ2">
    <property type="development level" value="Tdark"/>
</dbReference>
<dbReference type="PRO" id="PR:Q86YQ2"/>
<dbReference type="Proteomes" id="UP000005640">
    <property type="component" value="Unplaced"/>
</dbReference>
<dbReference type="RNAct" id="Q86YQ2">
    <property type="molecule type" value="protein"/>
</dbReference>
<dbReference type="GO" id="GO:0005576">
    <property type="term" value="C:extracellular region"/>
    <property type="evidence" value="ECO:0007669"/>
    <property type="project" value="UniProtKB-SubCell"/>
</dbReference>
<dbReference type="GO" id="GO:0008289">
    <property type="term" value="F:lipid binding"/>
    <property type="evidence" value="ECO:0007669"/>
    <property type="project" value="InterPro"/>
</dbReference>
<dbReference type="GO" id="GO:0043129">
    <property type="term" value="P:surfactant homeostasis"/>
    <property type="evidence" value="ECO:0000318"/>
    <property type="project" value="GO_Central"/>
</dbReference>
<dbReference type="Gene3D" id="3.15.10.10">
    <property type="entry name" value="Bactericidal permeability-increasing protein, domain 1"/>
    <property type="match status" value="1"/>
</dbReference>
<dbReference type="InterPro" id="IPR051902">
    <property type="entry name" value="BPI_fold-superfamily_member"/>
</dbReference>
<dbReference type="InterPro" id="IPR017942">
    <property type="entry name" value="Lipid-bd_serum_glycop_N"/>
</dbReference>
<dbReference type="PANTHER" id="PTHR47015">
    <property type="entry name" value="BPI FOLD-CONTAINING FAMILY A MEMBER 1"/>
    <property type="match status" value="1"/>
</dbReference>
<dbReference type="PANTHER" id="PTHR47015:SF3">
    <property type="entry name" value="BPIFA4P PROTEIN-RELATED"/>
    <property type="match status" value="1"/>
</dbReference>
<dbReference type="Pfam" id="PF01273">
    <property type="entry name" value="LBP_BPI_CETP"/>
    <property type="match status" value="1"/>
</dbReference>
<proteinExistence type="uncertain"/>